<gene>
    <name evidence="1" type="primary">kdpC</name>
    <name type="ordered locus">BCB4264_A0799</name>
</gene>
<organism>
    <name type="scientific">Bacillus cereus (strain B4264)</name>
    <dbReference type="NCBI Taxonomy" id="405532"/>
    <lineage>
        <taxon>Bacteria</taxon>
        <taxon>Bacillati</taxon>
        <taxon>Bacillota</taxon>
        <taxon>Bacilli</taxon>
        <taxon>Bacillales</taxon>
        <taxon>Bacillaceae</taxon>
        <taxon>Bacillus</taxon>
        <taxon>Bacillus cereus group</taxon>
    </lineage>
</organism>
<name>KDPC_BACC4</name>
<reference key="1">
    <citation type="submission" date="2008-10" db="EMBL/GenBank/DDBJ databases">
        <title>Genome sequence of Bacillus cereus B4264.</title>
        <authorList>
            <person name="Dodson R.J."/>
            <person name="Durkin A.S."/>
            <person name="Rosovitz M.J."/>
            <person name="Rasko D.A."/>
            <person name="Hoffmaster A."/>
            <person name="Ravel J."/>
            <person name="Sutton G."/>
        </authorList>
    </citation>
    <scope>NUCLEOTIDE SEQUENCE [LARGE SCALE GENOMIC DNA]</scope>
    <source>
        <strain>B4264</strain>
    </source>
</reference>
<dbReference type="EMBL" id="CP001176">
    <property type="protein sequence ID" value="ACK63260.1"/>
    <property type="molecule type" value="Genomic_DNA"/>
</dbReference>
<dbReference type="RefSeq" id="WP_000412594.1">
    <property type="nucleotide sequence ID" value="NC_011725.1"/>
</dbReference>
<dbReference type="SMR" id="B7HDG0"/>
<dbReference type="KEGG" id="bcb:BCB4264_A0799"/>
<dbReference type="HOGENOM" id="CLU_077094_1_0_9"/>
<dbReference type="Proteomes" id="UP000007096">
    <property type="component" value="Chromosome"/>
</dbReference>
<dbReference type="GO" id="GO:0005886">
    <property type="term" value="C:plasma membrane"/>
    <property type="evidence" value="ECO:0007669"/>
    <property type="project" value="UniProtKB-SubCell"/>
</dbReference>
<dbReference type="GO" id="GO:0005524">
    <property type="term" value="F:ATP binding"/>
    <property type="evidence" value="ECO:0007669"/>
    <property type="project" value="UniProtKB-UniRule"/>
</dbReference>
<dbReference type="GO" id="GO:0008556">
    <property type="term" value="F:P-type potassium transmembrane transporter activity"/>
    <property type="evidence" value="ECO:0007669"/>
    <property type="project" value="InterPro"/>
</dbReference>
<dbReference type="HAMAP" id="MF_00276">
    <property type="entry name" value="KdpC"/>
    <property type="match status" value="1"/>
</dbReference>
<dbReference type="InterPro" id="IPR003820">
    <property type="entry name" value="KdpC"/>
</dbReference>
<dbReference type="NCBIfam" id="TIGR00681">
    <property type="entry name" value="kdpC"/>
    <property type="match status" value="1"/>
</dbReference>
<dbReference type="NCBIfam" id="NF001454">
    <property type="entry name" value="PRK00315.1"/>
    <property type="match status" value="1"/>
</dbReference>
<dbReference type="NCBIfam" id="NF010601">
    <property type="entry name" value="PRK13997.1"/>
    <property type="match status" value="1"/>
</dbReference>
<dbReference type="PANTHER" id="PTHR30042">
    <property type="entry name" value="POTASSIUM-TRANSPORTING ATPASE C CHAIN"/>
    <property type="match status" value="1"/>
</dbReference>
<dbReference type="PANTHER" id="PTHR30042:SF2">
    <property type="entry name" value="POTASSIUM-TRANSPORTING ATPASE KDPC SUBUNIT"/>
    <property type="match status" value="1"/>
</dbReference>
<dbReference type="Pfam" id="PF02669">
    <property type="entry name" value="KdpC"/>
    <property type="match status" value="1"/>
</dbReference>
<dbReference type="PIRSF" id="PIRSF001296">
    <property type="entry name" value="K_ATPase_KdpC"/>
    <property type="match status" value="1"/>
</dbReference>
<accession>B7HDG0</accession>
<proteinExistence type="inferred from homology"/>
<evidence type="ECO:0000255" key="1">
    <source>
        <dbReference type="HAMAP-Rule" id="MF_00276"/>
    </source>
</evidence>
<comment type="function">
    <text evidence="1">Part of the high-affinity ATP-driven potassium transport (or Kdp) system, which catalyzes the hydrolysis of ATP coupled with the electrogenic transport of potassium into the cytoplasm. This subunit acts as a catalytic chaperone that increases the ATP-binding affinity of the ATP-hydrolyzing subunit KdpB by the formation of a transient KdpB/KdpC/ATP ternary complex.</text>
</comment>
<comment type="subunit">
    <text evidence="1">The system is composed of three essential subunits: KdpA, KdpB and KdpC.</text>
</comment>
<comment type="subcellular location">
    <subcellularLocation>
        <location evidence="1">Cell membrane</location>
        <topology evidence="1">Single-pass membrane protein</topology>
    </subcellularLocation>
</comment>
<comment type="similarity">
    <text evidence="1">Belongs to the KdpC family.</text>
</comment>
<protein>
    <recommendedName>
        <fullName evidence="1">Potassium-transporting ATPase KdpC subunit</fullName>
    </recommendedName>
    <alternativeName>
        <fullName evidence="1">ATP phosphohydrolase [potassium-transporting] C chain</fullName>
    </alternativeName>
    <alternativeName>
        <fullName evidence="1">Potassium-binding and translocating subunit C</fullName>
    </alternativeName>
    <alternativeName>
        <fullName evidence="1">Potassium-translocating ATPase C chain</fullName>
    </alternativeName>
</protein>
<feature type="chain" id="PRO_1000119350" description="Potassium-transporting ATPase KdpC subunit">
    <location>
        <begin position="1"/>
        <end position="193"/>
    </location>
</feature>
<feature type="transmembrane region" description="Helical" evidence="1">
    <location>
        <begin position="14"/>
        <end position="34"/>
    </location>
</feature>
<sequence>MEKKQSILSPIIRITFTFLVLCGLVYPLIVTGIAQAVMKDNADGSLIYNDKNEVIGSKLIGQNFTDPRYFQGRVSSIEYKAEASGSNNYAPSNPDLAKRVEKSIADWKEKNPAVPVTEIPIDLVTNSGSGLDPDISPKAASVQVDRISKLTNIPKEKLNQLIKDQTEGAALGLFGETRVNVLKLNLALQKLMK</sequence>
<keyword id="KW-0067">ATP-binding</keyword>
<keyword id="KW-1003">Cell membrane</keyword>
<keyword id="KW-0406">Ion transport</keyword>
<keyword id="KW-0472">Membrane</keyword>
<keyword id="KW-0547">Nucleotide-binding</keyword>
<keyword id="KW-0630">Potassium</keyword>
<keyword id="KW-0633">Potassium transport</keyword>
<keyword id="KW-0812">Transmembrane</keyword>
<keyword id="KW-1133">Transmembrane helix</keyword>
<keyword id="KW-0813">Transport</keyword>